<evidence type="ECO:0000255" key="1">
    <source>
        <dbReference type="HAMAP-Rule" id="MF_01007"/>
    </source>
</evidence>
<evidence type="ECO:0000256" key="2">
    <source>
        <dbReference type="SAM" id="MobiDB-lite"/>
    </source>
</evidence>
<name>RSMH_CERSK</name>
<protein>
    <recommendedName>
        <fullName evidence="1">Ribosomal RNA small subunit methyltransferase H</fullName>
        <ecNumber evidence="1">2.1.1.199</ecNumber>
    </recommendedName>
    <alternativeName>
        <fullName evidence="1">16S rRNA m(4)C1402 methyltransferase</fullName>
    </alternativeName>
    <alternativeName>
        <fullName evidence="1">rRNA (cytosine-N(4)-)-methyltransferase RsmH</fullName>
    </alternativeName>
</protein>
<comment type="function">
    <text evidence="1">Specifically methylates the N4 position of cytidine in position 1402 (C1402) of 16S rRNA.</text>
</comment>
<comment type="catalytic activity">
    <reaction evidence="1">
        <text>cytidine(1402) in 16S rRNA + S-adenosyl-L-methionine = N(4)-methylcytidine(1402) in 16S rRNA + S-adenosyl-L-homocysteine + H(+)</text>
        <dbReference type="Rhea" id="RHEA:42928"/>
        <dbReference type="Rhea" id="RHEA-COMP:10286"/>
        <dbReference type="Rhea" id="RHEA-COMP:10287"/>
        <dbReference type="ChEBI" id="CHEBI:15378"/>
        <dbReference type="ChEBI" id="CHEBI:57856"/>
        <dbReference type="ChEBI" id="CHEBI:59789"/>
        <dbReference type="ChEBI" id="CHEBI:74506"/>
        <dbReference type="ChEBI" id="CHEBI:82748"/>
        <dbReference type="EC" id="2.1.1.199"/>
    </reaction>
</comment>
<comment type="subcellular location">
    <subcellularLocation>
        <location evidence="1">Cytoplasm</location>
    </subcellularLocation>
</comment>
<comment type="similarity">
    <text evidence="1">Belongs to the methyltransferase superfamily. RsmH family.</text>
</comment>
<keyword id="KW-0963">Cytoplasm</keyword>
<keyword id="KW-0489">Methyltransferase</keyword>
<keyword id="KW-0698">rRNA processing</keyword>
<keyword id="KW-0949">S-adenosyl-L-methionine</keyword>
<keyword id="KW-0808">Transferase</keyword>
<proteinExistence type="inferred from homology"/>
<organism>
    <name type="scientific">Cereibacter sphaeroides (strain KD131 / KCTC 12085)</name>
    <name type="common">Rhodobacter sphaeroides</name>
    <dbReference type="NCBI Taxonomy" id="557760"/>
    <lineage>
        <taxon>Bacteria</taxon>
        <taxon>Pseudomonadati</taxon>
        <taxon>Pseudomonadota</taxon>
        <taxon>Alphaproteobacteria</taxon>
        <taxon>Rhodobacterales</taxon>
        <taxon>Paracoccaceae</taxon>
        <taxon>Cereibacter</taxon>
    </lineage>
</organism>
<accession>B9KNI8</accession>
<reference key="1">
    <citation type="journal article" date="2009" name="J. Bacteriol.">
        <title>Complete genome sequence of Rhodobacter sphaeroides KD131.</title>
        <authorList>
            <person name="Lim S.-K."/>
            <person name="Kim S.J."/>
            <person name="Cha S.H."/>
            <person name="Oh Y.-K."/>
            <person name="Rhee H.-J."/>
            <person name="Kim M.-S."/>
            <person name="Lee J.K."/>
        </authorList>
    </citation>
    <scope>NUCLEOTIDE SEQUENCE [LARGE SCALE GENOMIC DNA]</scope>
    <source>
        <strain>KD131 / KCTC 12085</strain>
    </source>
</reference>
<feature type="chain" id="PRO_0000387075" description="Ribosomal RNA small subunit methyltransferase H">
    <location>
        <begin position="1"/>
        <end position="331"/>
    </location>
</feature>
<feature type="region of interest" description="Disordered" evidence="2">
    <location>
        <begin position="287"/>
        <end position="331"/>
    </location>
</feature>
<feature type="binding site" evidence="1">
    <location>
        <begin position="38"/>
        <end position="40"/>
    </location>
    <ligand>
        <name>S-adenosyl-L-methionine</name>
        <dbReference type="ChEBI" id="CHEBI:59789"/>
    </ligand>
</feature>
<feature type="binding site" evidence="1">
    <location>
        <position position="56"/>
    </location>
    <ligand>
        <name>S-adenosyl-L-methionine</name>
        <dbReference type="ChEBI" id="CHEBI:59789"/>
    </ligand>
</feature>
<feature type="binding site" evidence="1">
    <location>
        <position position="83"/>
    </location>
    <ligand>
        <name>S-adenosyl-L-methionine</name>
        <dbReference type="ChEBI" id="CHEBI:59789"/>
    </ligand>
</feature>
<feature type="binding site" evidence="1">
    <location>
        <position position="100"/>
    </location>
    <ligand>
        <name>S-adenosyl-L-methionine</name>
        <dbReference type="ChEBI" id="CHEBI:59789"/>
    </ligand>
</feature>
<feature type="binding site" evidence="1">
    <location>
        <position position="107"/>
    </location>
    <ligand>
        <name>S-adenosyl-L-methionine</name>
        <dbReference type="ChEBI" id="CHEBI:59789"/>
    </ligand>
</feature>
<dbReference type="EC" id="2.1.1.199" evidence="1"/>
<dbReference type="EMBL" id="CP001150">
    <property type="protein sequence ID" value="ACM00266.1"/>
    <property type="molecule type" value="Genomic_DNA"/>
</dbReference>
<dbReference type="RefSeq" id="WP_012643694.1">
    <property type="nucleotide sequence ID" value="NC_011963.1"/>
</dbReference>
<dbReference type="SMR" id="B9KNI8"/>
<dbReference type="GeneID" id="67445868"/>
<dbReference type="KEGG" id="rsk:RSKD131_0406"/>
<dbReference type="HOGENOM" id="CLU_038422_1_1_5"/>
<dbReference type="GO" id="GO:0005737">
    <property type="term" value="C:cytoplasm"/>
    <property type="evidence" value="ECO:0007669"/>
    <property type="project" value="UniProtKB-SubCell"/>
</dbReference>
<dbReference type="GO" id="GO:0071424">
    <property type="term" value="F:rRNA (cytosine-N4-)-methyltransferase activity"/>
    <property type="evidence" value="ECO:0007669"/>
    <property type="project" value="UniProtKB-UniRule"/>
</dbReference>
<dbReference type="GO" id="GO:0070475">
    <property type="term" value="P:rRNA base methylation"/>
    <property type="evidence" value="ECO:0007669"/>
    <property type="project" value="UniProtKB-UniRule"/>
</dbReference>
<dbReference type="CDD" id="cd02440">
    <property type="entry name" value="AdoMet_MTases"/>
    <property type="match status" value="1"/>
</dbReference>
<dbReference type="FunFam" id="1.10.150.170:FF:000003">
    <property type="entry name" value="Ribosomal RNA small subunit methyltransferase H"/>
    <property type="match status" value="1"/>
</dbReference>
<dbReference type="Gene3D" id="1.10.150.170">
    <property type="entry name" value="Putative methyltransferase TM0872, insert domain"/>
    <property type="match status" value="1"/>
</dbReference>
<dbReference type="Gene3D" id="3.40.50.150">
    <property type="entry name" value="Vaccinia Virus protein VP39"/>
    <property type="match status" value="1"/>
</dbReference>
<dbReference type="HAMAP" id="MF_01007">
    <property type="entry name" value="16SrRNA_methyltr_H"/>
    <property type="match status" value="1"/>
</dbReference>
<dbReference type="InterPro" id="IPR002903">
    <property type="entry name" value="RsmH"/>
</dbReference>
<dbReference type="InterPro" id="IPR023397">
    <property type="entry name" value="SAM-dep_MeTrfase_MraW_recog"/>
</dbReference>
<dbReference type="InterPro" id="IPR029063">
    <property type="entry name" value="SAM-dependent_MTases_sf"/>
</dbReference>
<dbReference type="NCBIfam" id="TIGR00006">
    <property type="entry name" value="16S rRNA (cytosine(1402)-N(4))-methyltransferase RsmH"/>
    <property type="match status" value="1"/>
</dbReference>
<dbReference type="PANTHER" id="PTHR11265:SF0">
    <property type="entry name" value="12S RRNA N4-METHYLCYTIDINE METHYLTRANSFERASE"/>
    <property type="match status" value="1"/>
</dbReference>
<dbReference type="PANTHER" id="PTHR11265">
    <property type="entry name" value="S-ADENOSYL-METHYLTRANSFERASE MRAW"/>
    <property type="match status" value="1"/>
</dbReference>
<dbReference type="Pfam" id="PF01795">
    <property type="entry name" value="Methyltransf_5"/>
    <property type="match status" value="1"/>
</dbReference>
<dbReference type="PIRSF" id="PIRSF004486">
    <property type="entry name" value="MraW"/>
    <property type="match status" value="1"/>
</dbReference>
<dbReference type="SUPFAM" id="SSF81799">
    <property type="entry name" value="Putative methyltransferase TM0872, insert domain"/>
    <property type="match status" value="1"/>
</dbReference>
<dbReference type="SUPFAM" id="SSF53335">
    <property type="entry name" value="S-adenosyl-L-methionine-dependent methyltransferases"/>
    <property type="match status" value="1"/>
</dbReference>
<sequence length="331" mass="35675">MAEADTERRPHIPVLLRPLLAAVAPVEGTWLDGTFGAGGYARGLLEAGADRVIGVDRDPLALEMASGWAGDYGDRLRLVAGTFSQLDSHAGAPLDGVVLDLGVSSMQLDLAERGFSFQKDGPLDMRMSQEGESAADLVNTASEETLADILYHYGEERASRRIARAIVEARAAAPITRTLALAEIVARCLPRPKPGQMHPATRSFQAIRIAVNAEFSELVEGLEAAERALRPGGRLAVVTFHSLEDRIVKRFLQLRSGGEGQGNRYAPETRADAPRFTLPLRRAISPDEAELAENPRARSARLRVGVRTDAPAGKVDPQALGTPLIPKKGRR</sequence>
<gene>
    <name evidence="1" type="primary">rsmH</name>
    <name type="synonym">mraW</name>
    <name type="ordered locus">RSKD131_0406</name>
</gene>